<protein>
    <recommendedName>
        <fullName evidence="1">Trigger factor</fullName>
        <shortName evidence="1">TF</shortName>
        <ecNumber evidence="1">5.2.1.8</ecNumber>
    </recommendedName>
    <alternativeName>
        <fullName evidence="1">PPIase</fullName>
    </alternativeName>
</protein>
<reference key="1">
    <citation type="journal article" date="2010" name="PLoS ONE">
        <title>Genome sequence of Cronobacter sakazakii BAA-894 and comparative genomic hybridization analysis with other Cronobacter species.</title>
        <authorList>
            <person name="Kucerova E."/>
            <person name="Clifton S.W."/>
            <person name="Xia X.Q."/>
            <person name="Long F."/>
            <person name="Porwollik S."/>
            <person name="Fulton L."/>
            <person name="Fronick C."/>
            <person name="Minx P."/>
            <person name="Kyung K."/>
            <person name="Warren W."/>
            <person name="Fulton R."/>
            <person name="Feng D."/>
            <person name="Wollam A."/>
            <person name="Shah N."/>
            <person name="Bhonagiri V."/>
            <person name="Nash W.E."/>
            <person name="Hallsworth-Pepin K."/>
            <person name="Wilson R.K."/>
            <person name="McClelland M."/>
            <person name="Forsythe S.J."/>
        </authorList>
    </citation>
    <scope>NUCLEOTIDE SEQUENCE [LARGE SCALE GENOMIC DNA]</scope>
    <source>
        <strain>ATCC BAA-894</strain>
    </source>
</reference>
<name>TIG_CROS8</name>
<organism>
    <name type="scientific">Cronobacter sakazakii (strain ATCC BAA-894)</name>
    <name type="common">Enterobacter sakazakii</name>
    <dbReference type="NCBI Taxonomy" id="290339"/>
    <lineage>
        <taxon>Bacteria</taxon>
        <taxon>Pseudomonadati</taxon>
        <taxon>Pseudomonadota</taxon>
        <taxon>Gammaproteobacteria</taxon>
        <taxon>Enterobacterales</taxon>
        <taxon>Enterobacteriaceae</taxon>
        <taxon>Cronobacter</taxon>
    </lineage>
</organism>
<feature type="chain" id="PRO_1000022677" description="Trigger factor">
    <location>
        <begin position="1"/>
        <end position="432"/>
    </location>
</feature>
<feature type="domain" description="PPIase FKBP-type" evidence="1">
    <location>
        <begin position="161"/>
        <end position="246"/>
    </location>
</feature>
<evidence type="ECO:0000255" key="1">
    <source>
        <dbReference type="HAMAP-Rule" id="MF_00303"/>
    </source>
</evidence>
<sequence>MQVSVETTQGLGRRVTITIAADSIENAVKSELVNVAKKVRIDGFRKGKVPMNVVAQRYGASVRQDVLGDLMSRHFVDAIIKEKINPAGAPNYVPGEYKLGEDFTYAVEFEVYPEVELKGLESIEVEKPVVEVTDADVDTMLDTLRKQQATWKDKDGAADAEDRVTIDFTGSVDGEEFEGGKATDFVLAMGQGRMIPGFEEGIKGHKAGEEFTIDVTFPEEYHAENLKGKAAKFVINLKKVEERELPELTEEFIKRFGVEDGSVAGLRAEVRKNMERELKGAVRNRIKSQAIEGLVNANNIDVPAALIDGEIDVLRRQAAQRFGGNEKQALELPRELFEEQAKRRVVVGLLLGEVIRTHELKADEDRVKALIEEMASAYEDPSEVIEFYSKNNELMDNMRNVALEEQAVEAVLAKAKVTEKPTSFNELMNQQA</sequence>
<proteinExistence type="inferred from homology"/>
<keyword id="KW-0131">Cell cycle</keyword>
<keyword id="KW-0132">Cell division</keyword>
<keyword id="KW-0143">Chaperone</keyword>
<keyword id="KW-0963">Cytoplasm</keyword>
<keyword id="KW-0413">Isomerase</keyword>
<keyword id="KW-1185">Reference proteome</keyword>
<keyword id="KW-0697">Rotamase</keyword>
<comment type="function">
    <text evidence="1">Involved in protein export. Acts as a chaperone by maintaining the newly synthesized protein in an open conformation. Functions as a peptidyl-prolyl cis-trans isomerase.</text>
</comment>
<comment type="catalytic activity">
    <reaction evidence="1">
        <text>[protein]-peptidylproline (omega=180) = [protein]-peptidylproline (omega=0)</text>
        <dbReference type="Rhea" id="RHEA:16237"/>
        <dbReference type="Rhea" id="RHEA-COMP:10747"/>
        <dbReference type="Rhea" id="RHEA-COMP:10748"/>
        <dbReference type="ChEBI" id="CHEBI:83833"/>
        <dbReference type="ChEBI" id="CHEBI:83834"/>
        <dbReference type="EC" id="5.2.1.8"/>
    </reaction>
</comment>
<comment type="subcellular location">
    <subcellularLocation>
        <location>Cytoplasm</location>
    </subcellularLocation>
    <text evidence="1">About half TF is bound to the ribosome near the polypeptide exit tunnel while the other half is free in the cytoplasm.</text>
</comment>
<comment type="domain">
    <text evidence="1">Consists of 3 domains; the N-terminus binds the ribosome, the middle domain has PPIase activity, while the C-terminus has intrinsic chaperone activity on its own.</text>
</comment>
<comment type="similarity">
    <text evidence="1">Belongs to the FKBP-type PPIase family. Tig subfamily.</text>
</comment>
<accession>A7MFI9</accession>
<dbReference type="EC" id="5.2.1.8" evidence="1"/>
<dbReference type="EMBL" id="CP000783">
    <property type="protein sequence ID" value="ABU78091.1"/>
    <property type="molecule type" value="Genomic_DNA"/>
</dbReference>
<dbReference type="RefSeq" id="WP_004387731.1">
    <property type="nucleotide sequence ID" value="NC_009778.1"/>
</dbReference>
<dbReference type="SMR" id="A7MFI9"/>
<dbReference type="GeneID" id="56731650"/>
<dbReference type="KEGG" id="esa:ESA_02862"/>
<dbReference type="HOGENOM" id="CLU_033058_2_0_6"/>
<dbReference type="Proteomes" id="UP000000260">
    <property type="component" value="Chromosome"/>
</dbReference>
<dbReference type="GO" id="GO:0005737">
    <property type="term" value="C:cytoplasm"/>
    <property type="evidence" value="ECO:0007669"/>
    <property type="project" value="UniProtKB-SubCell"/>
</dbReference>
<dbReference type="GO" id="GO:0003755">
    <property type="term" value="F:peptidyl-prolyl cis-trans isomerase activity"/>
    <property type="evidence" value="ECO:0007669"/>
    <property type="project" value="UniProtKB-UniRule"/>
</dbReference>
<dbReference type="GO" id="GO:0044183">
    <property type="term" value="F:protein folding chaperone"/>
    <property type="evidence" value="ECO:0007669"/>
    <property type="project" value="TreeGrafter"/>
</dbReference>
<dbReference type="GO" id="GO:0043022">
    <property type="term" value="F:ribosome binding"/>
    <property type="evidence" value="ECO:0007669"/>
    <property type="project" value="TreeGrafter"/>
</dbReference>
<dbReference type="GO" id="GO:0051083">
    <property type="term" value="P:'de novo' cotranslational protein folding"/>
    <property type="evidence" value="ECO:0007669"/>
    <property type="project" value="TreeGrafter"/>
</dbReference>
<dbReference type="GO" id="GO:0051301">
    <property type="term" value="P:cell division"/>
    <property type="evidence" value="ECO:0007669"/>
    <property type="project" value="UniProtKB-KW"/>
</dbReference>
<dbReference type="GO" id="GO:0061077">
    <property type="term" value="P:chaperone-mediated protein folding"/>
    <property type="evidence" value="ECO:0007669"/>
    <property type="project" value="TreeGrafter"/>
</dbReference>
<dbReference type="GO" id="GO:0015031">
    <property type="term" value="P:protein transport"/>
    <property type="evidence" value="ECO:0007669"/>
    <property type="project" value="UniProtKB-UniRule"/>
</dbReference>
<dbReference type="GO" id="GO:0043335">
    <property type="term" value="P:protein unfolding"/>
    <property type="evidence" value="ECO:0007669"/>
    <property type="project" value="TreeGrafter"/>
</dbReference>
<dbReference type="FunFam" id="1.10.3120.10:FF:000001">
    <property type="entry name" value="Trigger factor"/>
    <property type="match status" value="1"/>
</dbReference>
<dbReference type="FunFam" id="3.10.50.40:FF:000001">
    <property type="entry name" value="Trigger factor"/>
    <property type="match status" value="1"/>
</dbReference>
<dbReference type="FunFam" id="3.30.70.1050:FF:000001">
    <property type="entry name" value="Trigger factor"/>
    <property type="match status" value="1"/>
</dbReference>
<dbReference type="Gene3D" id="3.10.50.40">
    <property type="match status" value="1"/>
</dbReference>
<dbReference type="Gene3D" id="3.30.70.1050">
    <property type="entry name" value="Trigger factor ribosome-binding domain"/>
    <property type="match status" value="1"/>
</dbReference>
<dbReference type="Gene3D" id="1.10.3120.10">
    <property type="entry name" value="Trigger factor, C-terminal domain"/>
    <property type="match status" value="1"/>
</dbReference>
<dbReference type="HAMAP" id="MF_00303">
    <property type="entry name" value="Trigger_factor_Tig"/>
    <property type="match status" value="1"/>
</dbReference>
<dbReference type="InterPro" id="IPR046357">
    <property type="entry name" value="PPIase_dom_sf"/>
</dbReference>
<dbReference type="InterPro" id="IPR001179">
    <property type="entry name" value="PPIase_FKBP_dom"/>
</dbReference>
<dbReference type="InterPro" id="IPR005215">
    <property type="entry name" value="Trig_fac"/>
</dbReference>
<dbReference type="InterPro" id="IPR008880">
    <property type="entry name" value="Trigger_fac_C"/>
</dbReference>
<dbReference type="InterPro" id="IPR037041">
    <property type="entry name" value="Trigger_fac_C_sf"/>
</dbReference>
<dbReference type="InterPro" id="IPR008881">
    <property type="entry name" value="Trigger_fac_ribosome-bd_bac"/>
</dbReference>
<dbReference type="InterPro" id="IPR036611">
    <property type="entry name" value="Trigger_fac_ribosome-bd_sf"/>
</dbReference>
<dbReference type="InterPro" id="IPR027304">
    <property type="entry name" value="Trigger_fact/SurA_dom_sf"/>
</dbReference>
<dbReference type="NCBIfam" id="TIGR00115">
    <property type="entry name" value="tig"/>
    <property type="match status" value="1"/>
</dbReference>
<dbReference type="PANTHER" id="PTHR30560">
    <property type="entry name" value="TRIGGER FACTOR CHAPERONE AND PEPTIDYL-PROLYL CIS/TRANS ISOMERASE"/>
    <property type="match status" value="1"/>
</dbReference>
<dbReference type="PANTHER" id="PTHR30560:SF3">
    <property type="entry name" value="TRIGGER FACTOR-LIKE PROTEIN TIG, CHLOROPLASTIC"/>
    <property type="match status" value="1"/>
</dbReference>
<dbReference type="Pfam" id="PF00254">
    <property type="entry name" value="FKBP_C"/>
    <property type="match status" value="1"/>
</dbReference>
<dbReference type="Pfam" id="PF05698">
    <property type="entry name" value="Trigger_C"/>
    <property type="match status" value="1"/>
</dbReference>
<dbReference type="Pfam" id="PF05697">
    <property type="entry name" value="Trigger_N"/>
    <property type="match status" value="1"/>
</dbReference>
<dbReference type="PIRSF" id="PIRSF003095">
    <property type="entry name" value="Trigger_factor"/>
    <property type="match status" value="1"/>
</dbReference>
<dbReference type="SUPFAM" id="SSF54534">
    <property type="entry name" value="FKBP-like"/>
    <property type="match status" value="1"/>
</dbReference>
<dbReference type="SUPFAM" id="SSF109998">
    <property type="entry name" value="Triger factor/SurA peptide-binding domain-like"/>
    <property type="match status" value="1"/>
</dbReference>
<dbReference type="SUPFAM" id="SSF102735">
    <property type="entry name" value="Trigger factor ribosome-binding domain"/>
    <property type="match status" value="1"/>
</dbReference>
<dbReference type="PROSITE" id="PS50059">
    <property type="entry name" value="FKBP_PPIASE"/>
    <property type="match status" value="1"/>
</dbReference>
<gene>
    <name evidence="1" type="primary">tig</name>
    <name type="ordered locus">ESA_02862</name>
</gene>